<sequence length="278" mass="29244">MSVVQPAGRRLTVRDIASRKSPAAEPVVCLTAYTAPMARLLDPHVDLLLVGDSLGMVIYGLPTTHGVTVEMMIAHGQAVVRGSSHALVVVDMPFGSYQESPAQAFRNAARILSETGAAAVKLEGGREMAETVAFLVQRGVPVMGHVGLKPQMVHAMGGFRAQGRDEAEAEAVVAETRAIAEAGAFSIVVEGTFEQVAARATREVSVPTIGIGASADCDGQVLVIDDALGLFTDFTPKFVKRYADLASTVSAAAEAYAADVRARRFPAPEHCFGIRKVG</sequence>
<proteinExistence type="inferred from homology"/>
<evidence type="ECO:0000255" key="1">
    <source>
        <dbReference type="HAMAP-Rule" id="MF_00156"/>
    </source>
</evidence>
<organism>
    <name type="scientific">Rhodospirillum rubrum (strain ATCC 11170 / ATH 1.1.1 / DSM 467 / LMG 4362 / NCIMB 8255 / S1)</name>
    <dbReference type="NCBI Taxonomy" id="269796"/>
    <lineage>
        <taxon>Bacteria</taxon>
        <taxon>Pseudomonadati</taxon>
        <taxon>Pseudomonadota</taxon>
        <taxon>Alphaproteobacteria</taxon>
        <taxon>Rhodospirillales</taxon>
        <taxon>Rhodospirillaceae</taxon>
        <taxon>Rhodospirillum</taxon>
    </lineage>
</organism>
<dbReference type="EC" id="2.1.2.11" evidence="1"/>
<dbReference type="EMBL" id="CP000230">
    <property type="protein sequence ID" value="ABC24115.1"/>
    <property type="molecule type" value="Genomic_DNA"/>
</dbReference>
<dbReference type="RefSeq" id="WP_011391068.1">
    <property type="nucleotide sequence ID" value="NC_007643.1"/>
</dbReference>
<dbReference type="RefSeq" id="YP_428402.1">
    <property type="nucleotide sequence ID" value="NC_007643.1"/>
</dbReference>
<dbReference type="SMR" id="Q2RP30"/>
<dbReference type="STRING" id="269796.Rru_A3321"/>
<dbReference type="EnsemblBacteria" id="ABC24115">
    <property type="protein sequence ID" value="ABC24115"/>
    <property type="gene ID" value="Rru_A3321"/>
</dbReference>
<dbReference type="KEGG" id="rru:Rru_A3321"/>
<dbReference type="PATRIC" id="fig|269796.9.peg.3434"/>
<dbReference type="eggNOG" id="COG0413">
    <property type="taxonomic scope" value="Bacteria"/>
</dbReference>
<dbReference type="HOGENOM" id="CLU_036645_1_0_5"/>
<dbReference type="PhylomeDB" id="Q2RP30"/>
<dbReference type="UniPathway" id="UPA00028">
    <property type="reaction ID" value="UER00003"/>
</dbReference>
<dbReference type="Proteomes" id="UP000001929">
    <property type="component" value="Chromosome"/>
</dbReference>
<dbReference type="GO" id="GO:0005737">
    <property type="term" value="C:cytoplasm"/>
    <property type="evidence" value="ECO:0007669"/>
    <property type="project" value="UniProtKB-SubCell"/>
</dbReference>
<dbReference type="GO" id="GO:0003864">
    <property type="term" value="F:3-methyl-2-oxobutanoate hydroxymethyltransferase activity"/>
    <property type="evidence" value="ECO:0007669"/>
    <property type="project" value="UniProtKB-UniRule"/>
</dbReference>
<dbReference type="GO" id="GO:0000287">
    <property type="term" value="F:magnesium ion binding"/>
    <property type="evidence" value="ECO:0007669"/>
    <property type="project" value="TreeGrafter"/>
</dbReference>
<dbReference type="GO" id="GO:0015940">
    <property type="term" value="P:pantothenate biosynthetic process"/>
    <property type="evidence" value="ECO:0007669"/>
    <property type="project" value="UniProtKB-UniRule"/>
</dbReference>
<dbReference type="CDD" id="cd06557">
    <property type="entry name" value="KPHMT-like"/>
    <property type="match status" value="1"/>
</dbReference>
<dbReference type="FunFam" id="3.20.20.60:FF:000003">
    <property type="entry name" value="3-methyl-2-oxobutanoate hydroxymethyltransferase"/>
    <property type="match status" value="1"/>
</dbReference>
<dbReference type="Gene3D" id="3.20.20.60">
    <property type="entry name" value="Phosphoenolpyruvate-binding domains"/>
    <property type="match status" value="1"/>
</dbReference>
<dbReference type="HAMAP" id="MF_00156">
    <property type="entry name" value="PanB"/>
    <property type="match status" value="1"/>
</dbReference>
<dbReference type="InterPro" id="IPR003700">
    <property type="entry name" value="Pantoate_hydroxy_MeTrfase"/>
</dbReference>
<dbReference type="InterPro" id="IPR015813">
    <property type="entry name" value="Pyrv/PenolPyrv_kinase-like_dom"/>
</dbReference>
<dbReference type="InterPro" id="IPR040442">
    <property type="entry name" value="Pyrv_kinase-like_dom_sf"/>
</dbReference>
<dbReference type="NCBIfam" id="TIGR00222">
    <property type="entry name" value="panB"/>
    <property type="match status" value="1"/>
</dbReference>
<dbReference type="NCBIfam" id="NF001452">
    <property type="entry name" value="PRK00311.1"/>
    <property type="match status" value="1"/>
</dbReference>
<dbReference type="PANTHER" id="PTHR20881">
    <property type="entry name" value="3-METHYL-2-OXOBUTANOATE HYDROXYMETHYLTRANSFERASE"/>
    <property type="match status" value="1"/>
</dbReference>
<dbReference type="PANTHER" id="PTHR20881:SF0">
    <property type="entry name" value="3-METHYL-2-OXOBUTANOATE HYDROXYMETHYLTRANSFERASE"/>
    <property type="match status" value="1"/>
</dbReference>
<dbReference type="Pfam" id="PF02548">
    <property type="entry name" value="Pantoate_transf"/>
    <property type="match status" value="1"/>
</dbReference>
<dbReference type="PIRSF" id="PIRSF000388">
    <property type="entry name" value="Pantoate_hydroxy_MeTrfase"/>
    <property type="match status" value="1"/>
</dbReference>
<dbReference type="SUPFAM" id="SSF51621">
    <property type="entry name" value="Phosphoenolpyruvate/pyruvate domain"/>
    <property type="match status" value="1"/>
</dbReference>
<protein>
    <recommendedName>
        <fullName evidence="1">3-methyl-2-oxobutanoate hydroxymethyltransferase</fullName>
        <ecNumber evidence="1">2.1.2.11</ecNumber>
    </recommendedName>
    <alternativeName>
        <fullName evidence="1">Ketopantoate hydroxymethyltransferase</fullName>
        <shortName evidence="1">KPHMT</shortName>
    </alternativeName>
</protein>
<reference key="1">
    <citation type="journal article" date="2011" name="Stand. Genomic Sci.">
        <title>Complete genome sequence of Rhodospirillum rubrum type strain (S1).</title>
        <authorList>
            <person name="Munk A.C."/>
            <person name="Copeland A."/>
            <person name="Lucas S."/>
            <person name="Lapidus A."/>
            <person name="Del Rio T.G."/>
            <person name="Barry K."/>
            <person name="Detter J.C."/>
            <person name="Hammon N."/>
            <person name="Israni S."/>
            <person name="Pitluck S."/>
            <person name="Brettin T."/>
            <person name="Bruce D."/>
            <person name="Han C."/>
            <person name="Tapia R."/>
            <person name="Gilna P."/>
            <person name="Schmutz J."/>
            <person name="Larimer F."/>
            <person name="Land M."/>
            <person name="Kyrpides N.C."/>
            <person name="Mavromatis K."/>
            <person name="Richardson P."/>
            <person name="Rohde M."/>
            <person name="Goeker M."/>
            <person name="Klenk H.P."/>
            <person name="Zhang Y."/>
            <person name="Roberts G.P."/>
            <person name="Reslewic S."/>
            <person name="Schwartz D.C."/>
        </authorList>
    </citation>
    <scope>NUCLEOTIDE SEQUENCE [LARGE SCALE GENOMIC DNA]</scope>
    <source>
        <strain>ATCC 11170 / ATH 1.1.1 / DSM 467 / LMG 4362 / NCIMB 8255 / S1</strain>
    </source>
</reference>
<keyword id="KW-0963">Cytoplasm</keyword>
<keyword id="KW-0460">Magnesium</keyword>
<keyword id="KW-0479">Metal-binding</keyword>
<keyword id="KW-0566">Pantothenate biosynthesis</keyword>
<keyword id="KW-1185">Reference proteome</keyword>
<keyword id="KW-0808">Transferase</keyword>
<accession>Q2RP30</accession>
<comment type="function">
    <text evidence="1">Catalyzes the reversible reaction in which hydroxymethyl group from 5,10-methylenetetrahydrofolate is transferred onto alpha-ketoisovalerate to form ketopantoate.</text>
</comment>
<comment type="catalytic activity">
    <reaction evidence="1">
        <text>3-methyl-2-oxobutanoate + (6R)-5,10-methylene-5,6,7,8-tetrahydrofolate + H2O = 2-dehydropantoate + (6S)-5,6,7,8-tetrahydrofolate</text>
        <dbReference type="Rhea" id="RHEA:11824"/>
        <dbReference type="ChEBI" id="CHEBI:11561"/>
        <dbReference type="ChEBI" id="CHEBI:11851"/>
        <dbReference type="ChEBI" id="CHEBI:15377"/>
        <dbReference type="ChEBI" id="CHEBI:15636"/>
        <dbReference type="ChEBI" id="CHEBI:57453"/>
        <dbReference type="EC" id="2.1.2.11"/>
    </reaction>
</comment>
<comment type="cofactor">
    <cofactor evidence="1">
        <name>Mg(2+)</name>
        <dbReference type="ChEBI" id="CHEBI:18420"/>
    </cofactor>
    <text evidence="1">Binds 1 Mg(2+) ion per subunit.</text>
</comment>
<comment type="pathway">
    <text evidence="1">Cofactor biosynthesis; (R)-pantothenate biosynthesis; (R)-pantoate from 3-methyl-2-oxobutanoate: step 1/2.</text>
</comment>
<comment type="subunit">
    <text evidence="1">Homodecamer; pentamer of dimers.</text>
</comment>
<comment type="subcellular location">
    <subcellularLocation>
        <location evidence="1">Cytoplasm</location>
    </subcellularLocation>
</comment>
<comment type="similarity">
    <text evidence="1">Belongs to the PanB family.</text>
</comment>
<feature type="chain" id="PRO_0000297359" description="3-methyl-2-oxobutanoate hydroxymethyltransferase">
    <location>
        <begin position="1"/>
        <end position="278"/>
    </location>
</feature>
<feature type="active site" description="Proton acceptor" evidence="1">
    <location>
        <position position="190"/>
    </location>
</feature>
<feature type="binding site" evidence="1">
    <location>
        <begin position="52"/>
        <end position="53"/>
    </location>
    <ligand>
        <name>3-methyl-2-oxobutanoate</name>
        <dbReference type="ChEBI" id="CHEBI:11851"/>
    </ligand>
</feature>
<feature type="binding site" evidence="1">
    <location>
        <position position="52"/>
    </location>
    <ligand>
        <name>Mg(2+)</name>
        <dbReference type="ChEBI" id="CHEBI:18420"/>
    </ligand>
</feature>
<feature type="binding site" evidence="1">
    <location>
        <position position="91"/>
    </location>
    <ligand>
        <name>3-methyl-2-oxobutanoate</name>
        <dbReference type="ChEBI" id="CHEBI:11851"/>
    </ligand>
</feature>
<feature type="binding site" evidence="1">
    <location>
        <position position="91"/>
    </location>
    <ligand>
        <name>Mg(2+)</name>
        <dbReference type="ChEBI" id="CHEBI:18420"/>
    </ligand>
</feature>
<feature type="binding site" evidence="1">
    <location>
        <position position="121"/>
    </location>
    <ligand>
        <name>3-methyl-2-oxobutanoate</name>
        <dbReference type="ChEBI" id="CHEBI:11851"/>
    </ligand>
</feature>
<feature type="binding site" evidence="1">
    <location>
        <position position="123"/>
    </location>
    <ligand>
        <name>Mg(2+)</name>
        <dbReference type="ChEBI" id="CHEBI:18420"/>
    </ligand>
</feature>
<gene>
    <name evidence="1" type="primary">panB</name>
    <name type="ordered locus">Rru_A3321</name>
</gene>
<name>PANB_RHORT</name>